<gene>
    <name type="primary">CERT1</name>
    <name type="synonym">CERT</name>
    <name type="synonym">COL4A3BP</name>
    <name type="synonym">STARD11</name>
</gene>
<comment type="function">
    <text evidence="3">Shelters ceramides and diacylglycerol lipids inside its START domain and mediates the intracellular trafficking of ceramides and diacylglycerol lipids in a non-vesicular manner.</text>
</comment>
<comment type="catalytic activity">
    <reaction evidence="1">
        <text>N-hexadecanoylsphing-4-enine(in) = N-hexadecanoylsphing-4-enine(out)</text>
        <dbReference type="Rhea" id="RHEA:45720"/>
        <dbReference type="ChEBI" id="CHEBI:72959"/>
    </reaction>
</comment>
<comment type="subunit">
    <text evidence="3">Interacts with VAPA and VAPB. Interaction with VAPB is less efficient than with VAPA. Interacts (via FFAT motif) with the MOSPD2 (via MSP domain).</text>
</comment>
<comment type="subcellular location">
    <subcellularLocation>
        <location evidence="3">Cytoplasm</location>
    </subcellularLocation>
    <subcellularLocation>
        <location evidence="3">Golgi apparatus</location>
    </subcellularLocation>
    <subcellularLocation>
        <location evidence="3">Endoplasmic reticulum</location>
    </subcellularLocation>
    <text evidence="3">Preferentially localized to the Golgi apparatus.</text>
</comment>
<comment type="domain">
    <text evidence="3">The START domain recognizes ceramides and diacylglycerol lipids, interacts with membranes, and mediates the intermembrane transfer of ceramides and diacylglycerol lipids.</text>
</comment>
<comment type="domain">
    <text evidence="3">The PH domain targets the Golgi apparatus.</text>
</comment>
<comment type="domain">
    <text evidence="3">The FFAT motif is required for interaction with VAPA, VAPB and MOSPD2.</text>
</comment>
<comment type="PTM">
    <text evidence="3">Phosphorylation on Ser-132 decreases the affinity toward phosphatidylinositol 4-phosphate at Golgi membranes and reduces ceramide transfer activity. Inactivated by hyperphosphorylation of serine residues by CSNK1G2/CK1 that triggers dissociation from the Golgi complex, thus down-regulating ER-to-Golgi transport of ceramide and sphingomyelin synthesis.</text>
</comment>
<reference key="1">
    <citation type="submission" date="2004-11" db="EMBL/GenBank/DDBJ databases">
        <authorList>
            <consortium name="The German cDNA consortium"/>
        </authorList>
    </citation>
    <scope>NUCLEOTIDE SEQUENCE [LARGE SCALE MRNA]</scope>
    <source>
        <tissue>Brain cortex</tissue>
    </source>
</reference>
<feature type="chain" id="PRO_0000253586" description="Ceramide transfer protein">
    <location>
        <begin position="1"/>
        <end position="624"/>
    </location>
</feature>
<feature type="domain" description="PH" evidence="5">
    <location>
        <begin position="23"/>
        <end position="117"/>
    </location>
</feature>
<feature type="domain" description="START" evidence="6">
    <location>
        <begin position="389"/>
        <end position="618"/>
    </location>
</feature>
<feature type="region of interest" description="Disordered" evidence="7">
    <location>
        <begin position="1"/>
        <end position="24"/>
    </location>
</feature>
<feature type="coiled-coil region" evidence="4">
    <location>
        <begin position="263"/>
        <end position="303"/>
    </location>
</feature>
<feature type="short sequence motif" description="FFAT" evidence="3">
    <location>
        <begin position="321"/>
        <end position="327"/>
    </location>
</feature>
<feature type="compositionally biased region" description="Polar residues" evidence="7">
    <location>
        <begin position="1"/>
        <end position="11"/>
    </location>
</feature>
<feature type="binding site" evidence="3">
    <location>
        <position position="472"/>
    </location>
    <ligand>
        <name>an N-acylsphing-4-enine</name>
        <dbReference type="ChEBI" id="CHEBI:52639"/>
    </ligand>
</feature>
<feature type="binding site" evidence="3">
    <location>
        <position position="493"/>
    </location>
    <ligand>
        <name>an N-acylsphing-4-enine</name>
        <dbReference type="ChEBI" id="CHEBI:52639"/>
    </ligand>
</feature>
<feature type="binding site" evidence="3">
    <location>
        <position position="530"/>
    </location>
    <ligand>
        <name>an N-acylsphing-4-enine</name>
        <dbReference type="ChEBI" id="CHEBI:52639"/>
    </ligand>
</feature>
<feature type="binding site" evidence="3">
    <location>
        <position position="579"/>
    </location>
    <ligand>
        <name>an N-acylsphing-4-enine</name>
        <dbReference type="ChEBI" id="CHEBI:52639"/>
    </ligand>
</feature>
<feature type="modified residue" description="Phosphoserine" evidence="3">
    <location>
        <position position="126"/>
    </location>
</feature>
<feature type="modified residue" description="Phosphoserine; by PKD" evidence="3">
    <location>
        <position position="132"/>
    </location>
</feature>
<feature type="modified residue" description="Phosphoserine" evidence="2">
    <location>
        <position position="135"/>
    </location>
</feature>
<feature type="modified residue" description="Phosphoserine" evidence="3">
    <location>
        <position position="315"/>
    </location>
</feature>
<feature type="modified residue" description="Phosphotyrosine" evidence="3">
    <location>
        <position position="372"/>
    </location>
</feature>
<feature type="modified residue" description="Phosphoserine" evidence="3">
    <location>
        <position position="373"/>
    </location>
</feature>
<feature type="modified residue" description="Phosphoserine" evidence="3">
    <location>
        <position position="377"/>
    </location>
</feature>
<feature type="modified residue" description="Phosphoserine" evidence="3">
    <location>
        <position position="380"/>
    </location>
</feature>
<dbReference type="EMBL" id="CR860461">
    <property type="protein sequence ID" value="CAH92584.1"/>
    <property type="molecule type" value="mRNA"/>
</dbReference>
<dbReference type="RefSeq" id="NP_001126514.1">
    <property type="nucleotide sequence ID" value="NM_001133042.2"/>
</dbReference>
<dbReference type="BMRB" id="Q5R6M6"/>
<dbReference type="SMR" id="Q5R6M6"/>
<dbReference type="FunCoup" id="Q5R6M6">
    <property type="interactions" value="4909"/>
</dbReference>
<dbReference type="STRING" id="9601.ENSPPYP00000017396"/>
<dbReference type="GeneID" id="100173502"/>
<dbReference type="KEGG" id="pon:100173502"/>
<dbReference type="CTD" id="10087"/>
<dbReference type="eggNOG" id="KOG1739">
    <property type="taxonomic scope" value="Eukaryota"/>
</dbReference>
<dbReference type="InParanoid" id="Q5R6M6"/>
<dbReference type="OrthoDB" id="2344588at2759"/>
<dbReference type="Proteomes" id="UP000001595">
    <property type="component" value="Unplaced"/>
</dbReference>
<dbReference type="GO" id="GO:0005783">
    <property type="term" value="C:endoplasmic reticulum"/>
    <property type="evidence" value="ECO:0007669"/>
    <property type="project" value="UniProtKB-SubCell"/>
</dbReference>
<dbReference type="GO" id="GO:0005794">
    <property type="term" value="C:Golgi apparatus"/>
    <property type="evidence" value="ECO:0000250"/>
    <property type="project" value="UniProtKB"/>
</dbReference>
<dbReference type="GO" id="GO:0097001">
    <property type="term" value="F:ceramide binding"/>
    <property type="evidence" value="ECO:0000250"/>
    <property type="project" value="UniProtKB"/>
</dbReference>
<dbReference type="GO" id="GO:0120017">
    <property type="term" value="F:ceramide transfer activity"/>
    <property type="evidence" value="ECO:0000250"/>
    <property type="project" value="UniProtKB"/>
</dbReference>
<dbReference type="GO" id="GO:0035621">
    <property type="term" value="P:ER to Golgi ceramide transport"/>
    <property type="evidence" value="ECO:0000250"/>
    <property type="project" value="UniProtKB"/>
</dbReference>
<dbReference type="CDD" id="cd13283">
    <property type="entry name" value="PH_GPBP"/>
    <property type="match status" value="1"/>
</dbReference>
<dbReference type="CDD" id="cd08872">
    <property type="entry name" value="START_STARD11-like"/>
    <property type="match status" value="1"/>
</dbReference>
<dbReference type="FunFam" id="2.30.29.30:FF:000104">
    <property type="entry name" value="collagen type IV alpha-3-binding protein-like isoform X2"/>
    <property type="match status" value="1"/>
</dbReference>
<dbReference type="FunFam" id="3.30.530.20:FF:000003">
    <property type="entry name" value="Collagen type IV alpha-3-binding protein-like protein"/>
    <property type="match status" value="1"/>
</dbReference>
<dbReference type="Gene3D" id="3.30.530.20">
    <property type="match status" value="1"/>
</dbReference>
<dbReference type="Gene3D" id="2.30.29.30">
    <property type="entry name" value="Pleckstrin-homology domain (PH domain)/Phosphotyrosine-binding domain (PTB)"/>
    <property type="match status" value="1"/>
</dbReference>
<dbReference type="InterPro" id="IPR011993">
    <property type="entry name" value="PH-like_dom_sf"/>
</dbReference>
<dbReference type="InterPro" id="IPR001849">
    <property type="entry name" value="PH_domain"/>
</dbReference>
<dbReference type="InterPro" id="IPR041952">
    <property type="entry name" value="STARD11_START"/>
</dbReference>
<dbReference type="InterPro" id="IPR023393">
    <property type="entry name" value="START-like_dom_sf"/>
</dbReference>
<dbReference type="InterPro" id="IPR002913">
    <property type="entry name" value="START_lipid-bd_dom"/>
</dbReference>
<dbReference type="InterPro" id="IPR051213">
    <property type="entry name" value="START_lipid_transfer"/>
</dbReference>
<dbReference type="PANTHER" id="PTHR19308:SF53">
    <property type="entry name" value="CERAMIDE TRANSFER PROTEIN"/>
    <property type="match status" value="1"/>
</dbReference>
<dbReference type="PANTHER" id="PTHR19308">
    <property type="entry name" value="PHOSPHATIDYLCHOLINE TRANSFER PROTEIN"/>
    <property type="match status" value="1"/>
</dbReference>
<dbReference type="Pfam" id="PF00169">
    <property type="entry name" value="PH"/>
    <property type="match status" value="1"/>
</dbReference>
<dbReference type="Pfam" id="PF01852">
    <property type="entry name" value="START"/>
    <property type="match status" value="1"/>
</dbReference>
<dbReference type="SMART" id="SM00233">
    <property type="entry name" value="PH"/>
    <property type="match status" value="1"/>
</dbReference>
<dbReference type="SMART" id="SM00234">
    <property type="entry name" value="START"/>
    <property type="match status" value="1"/>
</dbReference>
<dbReference type="SUPFAM" id="SSF55961">
    <property type="entry name" value="Bet v1-like"/>
    <property type="match status" value="1"/>
</dbReference>
<dbReference type="SUPFAM" id="SSF50729">
    <property type="entry name" value="PH domain-like"/>
    <property type="match status" value="1"/>
</dbReference>
<dbReference type="PROSITE" id="PS50003">
    <property type="entry name" value="PH_DOMAIN"/>
    <property type="match status" value="1"/>
</dbReference>
<dbReference type="PROSITE" id="PS50848">
    <property type="entry name" value="START"/>
    <property type="match status" value="1"/>
</dbReference>
<proteinExistence type="evidence at transcript level"/>
<organism>
    <name type="scientific">Pongo abelii</name>
    <name type="common">Sumatran orangutan</name>
    <name type="synonym">Pongo pygmaeus abelii</name>
    <dbReference type="NCBI Taxonomy" id="9601"/>
    <lineage>
        <taxon>Eukaryota</taxon>
        <taxon>Metazoa</taxon>
        <taxon>Chordata</taxon>
        <taxon>Craniata</taxon>
        <taxon>Vertebrata</taxon>
        <taxon>Euteleostomi</taxon>
        <taxon>Mammalia</taxon>
        <taxon>Eutheria</taxon>
        <taxon>Euarchontoglires</taxon>
        <taxon>Primates</taxon>
        <taxon>Haplorrhini</taxon>
        <taxon>Catarrhini</taxon>
        <taxon>Hominidae</taxon>
        <taxon>Pongo</taxon>
    </lineage>
</organism>
<protein>
    <recommendedName>
        <fullName evidence="8">Ceramide transfer protein</fullName>
        <shortName>CERT</shortName>
    </recommendedName>
    <alternativeName>
        <fullName>Collagen type IV alpha-3-binding protein</fullName>
    </alternativeName>
    <alternativeName>
        <fullName>START domain-containing protein 11</fullName>
        <shortName>StARD11</shortName>
    </alternativeName>
    <alternativeName>
        <fullName>StAR-related lipid transfer protein 11</fullName>
    </alternativeName>
</protein>
<keyword id="KW-0175">Coiled coil</keyword>
<keyword id="KW-0963">Cytoplasm</keyword>
<keyword id="KW-0256">Endoplasmic reticulum</keyword>
<keyword id="KW-0333">Golgi apparatus</keyword>
<keyword id="KW-0445">Lipid transport</keyword>
<keyword id="KW-0446">Lipid-binding</keyword>
<keyword id="KW-0597">Phosphoprotein</keyword>
<keyword id="KW-1185">Reference proteome</keyword>
<keyword id="KW-0813">Transport</keyword>
<name>CERT_PONAB</name>
<accession>Q5R6M6</accession>
<evidence type="ECO:0000250" key="1">
    <source>
        <dbReference type="UniProtKB" id="Q6VVX2"/>
    </source>
</evidence>
<evidence type="ECO:0000250" key="2">
    <source>
        <dbReference type="UniProtKB" id="Q9EQG9"/>
    </source>
</evidence>
<evidence type="ECO:0000250" key="3">
    <source>
        <dbReference type="UniProtKB" id="Q9Y5P4"/>
    </source>
</evidence>
<evidence type="ECO:0000255" key="4"/>
<evidence type="ECO:0000255" key="5">
    <source>
        <dbReference type="PROSITE-ProRule" id="PRU00145"/>
    </source>
</evidence>
<evidence type="ECO:0000255" key="6">
    <source>
        <dbReference type="PROSITE-ProRule" id="PRU00197"/>
    </source>
</evidence>
<evidence type="ECO:0000256" key="7">
    <source>
        <dbReference type="SAM" id="MobiDB-lite"/>
    </source>
</evidence>
<evidence type="ECO:0000305" key="8"/>
<sequence length="624" mass="70854">MSDNQSWNSSGSEEDPETESGPPVERCGVLSKWTNYIHGWQDRWVVLKNNALSYYKSEDETEYGCRGSICLSKAVITPHDFDECRFDISVNDSVWYLRAQDPDHRQQWIDAIEQHKTESGYGSESSLRRHGSMVSLVSGASGYSATSTSSFKKGHSLREKLAEMETFRDILCRQVDTLQKYFDACADAVSKDELQRDKVVEDDEDDFPTTRSDGDFLHSTNGNKEKLFPRVTPKGINGIDFKGEAITFKATTVGIPATLSHCIELMVKREDSWQKRLDKETEKKRRTEEAYKNAMTELKKKSHFGGPDYEEGPNSLINEEEFFDAVEAALDRQDEIEEQSQSEKVRLHWPTSLPSGDAFSSVGTHRFVQKPYSRSSSVSSIDLVSASDDVHRFSSQVEEMVQNHMTYSLQDVGGDANWQLVVEEGEMKVYRREVEENGIVLDPLKATRAVKGVTGHEVCNYFWNVDVRNDWETTIENFHVVETLADNAIIIYQTHKRVWPASQRDVLYLSVIRKIPALTENDPETWIVCNFSVDHDSAPLNNRCVRAKINVAMICQTLVSPPEGNQEISRDNILCKITYVANVNPGGWAPASVLRAVAKREYPKFLKRFTSYVQEKTAGKPILF</sequence>